<name>Y1749_STRPZ</name>
<evidence type="ECO:0000255" key="1">
    <source>
        <dbReference type="HAMAP-Rule" id="MF_01448"/>
    </source>
</evidence>
<protein>
    <recommendedName>
        <fullName evidence="1">UPF0473 protein Spy49_1749c</fullName>
    </recommendedName>
</protein>
<organism>
    <name type="scientific">Streptococcus pyogenes serotype M49 (strain NZ131)</name>
    <dbReference type="NCBI Taxonomy" id="471876"/>
    <lineage>
        <taxon>Bacteria</taxon>
        <taxon>Bacillati</taxon>
        <taxon>Bacillota</taxon>
        <taxon>Bacilli</taxon>
        <taxon>Lactobacillales</taxon>
        <taxon>Streptococcaceae</taxon>
        <taxon>Streptococcus</taxon>
    </lineage>
</organism>
<dbReference type="EMBL" id="CP000829">
    <property type="protein sequence ID" value="ACI61999.1"/>
    <property type="molecule type" value="Genomic_DNA"/>
</dbReference>
<dbReference type="KEGG" id="soz:Spy49_1749c"/>
<dbReference type="HOGENOM" id="CLU_146610_2_1_9"/>
<dbReference type="Proteomes" id="UP000001039">
    <property type="component" value="Chromosome"/>
</dbReference>
<dbReference type="HAMAP" id="MF_01448">
    <property type="entry name" value="UPF0473"/>
    <property type="match status" value="1"/>
</dbReference>
<dbReference type="InterPro" id="IPR009711">
    <property type="entry name" value="UPF0473"/>
</dbReference>
<dbReference type="NCBIfam" id="NF010215">
    <property type="entry name" value="PRK13678.1-2"/>
    <property type="match status" value="1"/>
</dbReference>
<dbReference type="NCBIfam" id="NF010217">
    <property type="entry name" value="PRK13678.1-4"/>
    <property type="match status" value="1"/>
</dbReference>
<dbReference type="PANTHER" id="PTHR40066">
    <property type="entry name" value="UPF0473 PROTEIN CBO2561/CLC_2432"/>
    <property type="match status" value="1"/>
</dbReference>
<dbReference type="PANTHER" id="PTHR40066:SF1">
    <property type="entry name" value="UPF0473 PROTEIN CBO2561_CLC_2432"/>
    <property type="match status" value="1"/>
</dbReference>
<dbReference type="Pfam" id="PF06949">
    <property type="entry name" value="DUF1292"/>
    <property type="match status" value="1"/>
</dbReference>
<sequence>MTHNHENDHQHEVITLVDEQGNETLFEILLTIDGREEFGKNYVLLVPAGSEEDESGEIEIQAYSFTENEDGTEGDLQPIPEDSDAEWDMIEEVFNSFLDEN</sequence>
<feature type="chain" id="PRO_1000200985" description="UPF0473 protein Spy49_1749c">
    <location>
        <begin position="1"/>
        <end position="101"/>
    </location>
</feature>
<gene>
    <name type="ordered locus">Spy49_1749c</name>
</gene>
<accession>B5XJ00</accession>
<proteinExistence type="inferred from homology"/>
<reference key="1">
    <citation type="journal article" date="2008" name="J. Bacteriol.">
        <title>Genome sequence of a nephritogenic and highly transformable M49 strain of Streptococcus pyogenes.</title>
        <authorList>
            <person name="McShan W.M."/>
            <person name="Ferretti J.J."/>
            <person name="Karasawa T."/>
            <person name="Suvorov A.N."/>
            <person name="Lin S."/>
            <person name="Qin B."/>
            <person name="Jia H."/>
            <person name="Kenton S."/>
            <person name="Najar F."/>
            <person name="Wu H."/>
            <person name="Scott J."/>
            <person name="Roe B.A."/>
            <person name="Savic D.J."/>
        </authorList>
    </citation>
    <scope>NUCLEOTIDE SEQUENCE [LARGE SCALE GENOMIC DNA]</scope>
    <source>
        <strain>NZ131</strain>
    </source>
</reference>
<comment type="similarity">
    <text evidence="1">Belongs to the UPF0473 family.</text>
</comment>